<dbReference type="EC" id="3.1.11.6" evidence="1"/>
<dbReference type="EMBL" id="CP001074">
    <property type="protein sequence ID" value="ACE89307.1"/>
    <property type="molecule type" value="Genomic_DNA"/>
</dbReference>
<dbReference type="SMR" id="B3PYF6"/>
<dbReference type="KEGG" id="rec:RHECIAT_CH0000313"/>
<dbReference type="eggNOG" id="COG1570">
    <property type="taxonomic scope" value="Bacteria"/>
</dbReference>
<dbReference type="HOGENOM" id="CLU_023625_3_1_5"/>
<dbReference type="Proteomes" id="UP000008817">
    <property type="component" value="Chromosome"/>
</dbReference>
<dbReference type="GO" id="GO:0005737">
    <property type="term" value="C:cytoplasm"/>
    <property type="evidence" value="ECO:0007669"/>
    <property type="project" value="UniProtKB-SubCell"/>
</dbReference>
<dbReference type="GO" id="GO:0009318">
    <property type="term" value="C:exodeoxyribonuclease VII complex"/>
    <property type="evidence" value="ECO:0007669"/>
    <property type="project" value="InterPro"/>
</dbReference>
<dbReference type="GO" id="GO:0008855">
    <property type="term" value="F:exodeoxyribonuclease VII activity"/>
    <property type="evidence" value="ECO:0007669"/>
    <property type="project" value="UniProtKB-UniRule"/>
</dbReference>
<dbReference type="GO" id="GO:0003676">
    <property type="term" value="F:nucleic acid binding"/>
    <property type="evidence" value="ECO:0007669"/>
    <property type="project" value="InterPro"/>
</dbReference>
<dbReference type="GO" id="GO:0006308">
    <property type="term" value="P:DNA catabolic process"/>
    <property type="evidence" value="ECO:0007669"/>
    <property type="project" value="UniProtKB-UniRule"/>
</dbReference>
<dbReference type="CDD" id="cd04489">
    <property type="entry name" value="ExoVII_LU_OBF"/>
    <property type="match status" value="1"/>
</dbReference>
<dbReference type="HAMAP" id="MF_00378">
    <property type="entry name" value="Exonuc_7_L"/>
    <property type="match status" value="1"/>
</dbReference>
<dbReference type="InterPro" id="IPR003753">
    <property type="entry name" value="Exonuc_VII_L"/>
</dbReference>
<dbReference type="InterPro" id="IPR020579">
    <property type="entry name" value="Exonuc_VII_lsu_C"/>
</dbReference>
<dbReference type="InterPro" id="IPR025824">
    <property type="entry name" value="OB-fold_nuc-bd_dom"/>
</dbReference>
<dbReference type="NCBIfam" id="TIGR00237">
    <property type="entry name" value="xseA"/>
    <property type="match status" value="1"/>
</dbReference>
<dbReference type="PANTHER" id="PTHR30008">
    <property type="entry name" value="EXODEOXYRIBONUCLEASE 7 LARGE SUBUNIT"/>
    <property type="match status" value="1"/>
</dbReference>
<dbReference type="PANTHER" id="PTHR30008:SF0">
    <property type="entry name" value="EXODEOXYRIBONUCLEASE 7 LARGE SUBUNIT"/>
    <property type="match status" value="1"/>
</dbReference>
<dbReference type="Pfam" id="PF02601">
    <property type="entry name" value="Exonuc_VII_L"/>
    <property type="match status" value="2"/>
</dbReference>
<dbReference type="Pfam" id="PF13742">
    <property type="entry name" value="tRNA_anti_2"/>
    <property type="match status" value="1"/>
</dbReference>
<proteinExistence type="inferred from homology"/>
<keyword id="KW-0963">Cytoplasm</keyword>
<keyword id="KW-0269">Exonuclease</keyword>
<keyword id="KW-0378">Hydrolase</keyword>
<keyword id="KW-0540">Nuclease</keyword>
<sequence>MSNLFDSDSPTNLAEYSVSELSGSIKRTVETAFDQVRVRGEISGYRGPHSSGHAYFALKDDRARIDAVIWKGTFSRLKFRPEEGMEVIATGKVTTFPGSSKYQIVIETLEPAGAGALMALIEERKRKLGAEGLFDAARKKRLPFMPKVIGVVTSPTGAVIRDILHRISDRFPVHVLVWPVKVQGEGAGDEVANAIRGFNALEPGGAIARPDVLIVARGGGSLEDLWSFNDEIVVRAAAESRIPLISAVGHETDWTLIDYAADVRAPTPTGAAEMAVPVKAELEAQATALAARLQGCINRQMDQRRQSVRALMRALPSLDQLLALPRRRFDEAAAGLGRGLELNTINKRRGFERVASHLRPDVLSNRIAERRQLLNDRMARAERTVERLLDRSKSRIDRAEAILASLPTRLKTQTDRGRERLGNLTRHADTAIRHQLTRARAELSAQDRVLQSLSYKNVLKRGYAVIRDEDDRPVSQAAALSAGMGIAIEFADGRVGAMTTEGGTPPAGAKKRSAKPADPTKQGSLF</sequence>
<reference key="1">
    <citation type="journal article" date="2010" name="Appl. Environ. Microbiol.">
        <title>Conserved symbiotic plasmid DNA sequences in the multireplicon pangenomic structure of Rhizobium etli.</title>
        <authorList>
            <person name="Gonzalez V."/>
            <person name="Acosta J.L."/>
            <person name="Santamaria R.I."/>
            <person name="Bustos P."/>
            <person name="Fernandez J.L."/>
            <person name="Hernandez Gonzalez I.L."/>
            <person name="Diaz R."/>
            <person name="Flores M."/>
            <person name="Palacios R."/>
            <person name="Mora J."/>
            <person name="Davila G."/>
        </authorList>
    </citation>
    <scope>NUCLEOTIDE SEQUENCE [LARGE SCALE GENOMIC DNA]</scope>
    <source>
        <strain>CIAT 652</strain>
    </source>
</reference>
<accession>B3PYF6</accession>
<organism>
    <name type="scientific">Rhizobium etli (strain CIAT 652)</name>
    <dbReference type="NCBI Taxonomy" id="491916"/>
    <lineage>
        <taxon>Bacteria</taxon>
        <taxon>Pseudomonadati</taxon>
        <taxon>Pseudomonadota</taxon>
        <taxon>Alphaproteobacteria</taxon>
        <taxon>Hyphomicrobiales</taxon>
        <taxon>Rhizobiaceae</taxon>
        <taxon>Rhizobium/Agrobacterium group</taxon>
        <taxon>Rhizobium</taxon>
    </lineage>
</organism>
<feature type="chain" id="PRO_1000122078" description="Exodeoxyribonuclease 7 large subunit">
    <location>
        <begin position="1"/>
        <end position="526"/>
    </location>
</feature>
<feature type="region of interest" description="Disordered" evidence="2">
    <location>
        <begin position="496"/>
        <end position="526"/>
    </location>
</feature>
<gene>
    <name evidence="1" type="primary">xseA</name>
    <name type="ordered locus">RHECIAT_CH0000313</name>
</gene>
<comment type="function">
    <text evidence="1">Bidirectionally degrades single-stranded DNA into large acid-insoluble oligonucleotides, which are then degraded further into small acid-soluble oligonucleotides.</text>
</comment>
<comment type="catalytic activity">
    <reaction evidence="1">
        <text>Exonucleolytic cleavage in either 5'- to 3'- or 3'- to 5'-direction to yield nucleoside 5'-phosphates.</text>
        <dbReference type="EC" id="3.1.11.6"/>
    </reaction>
</comment>
<comment type="subunit">
    <text evidence="1">Heterooligomer composed of large and small subunits.</text>
</comment>
<comment type="subcellular location">
    <subcellularLocation>
        <location evidence="1">Cytoplasm</location>
    </subcellularLocation>
</comment>
<comment type="similarity">
    <text evidence="1">Belongs to the XseA family.</text>
</comment>
<name>EX7L_RHIE6</name>
<protein>
    <recommendedName>
        <fullName evidence="1">Exodeoxyribonuclease 7 large subunit</fullName>
        <ecNumber evidence="1">3.1.11.6</ecNumber>
    </recommendedName>
    <alternativeName>
        <fullName evidence="1">Exodeoxyribonuclease VII large subunit</fullName>
        <shortName evidence="1">Exonuclease VII large subunit</shortName>
    </alternativeName>
</protein>
<evidence type="ECO:0000255" key="1">
    <source>
        <dbReference type="HAMAP-Rule" id="MF_00378"/>
    </source>
</evidence>
<evidence type="ECO:0000256" key="2">
    <source>
        <dbReference type="SAM" id="MobiDB-lite"/>
    </source>
</evidence>